<reference key="1">
    <citation type="journal article" date="1996" name="Plant Mol. Biol.">
        <title>Nitrogen metabolism in actinorhizal nodules of Alnus glutinosa: expression of glutamine synthetase and acetylornithine transaminase.</title>
        <authorList>
            <person name="Guan C."/>
            <person name="Ribeiro A."/>
            <person name="Akkermans A.D.L."/>
            <person name="Jing Y."/>
            <person name="van Kammen A."/>
            <person name="Bisseling T."/>
            <person name="Pawlowski K."/>
        </authorList>
    </citation>
    <scope>NUCLEOTIDE SEQUENCE [MRNA]</scope>
    <source>
        <tissue>Root nodule</tissue>
    </source>
</reference>
<accession>O04866</accession>
<proteinExistence type="evidence at transcript level"/>
<gene>
    <name type="primary">AG118</name>
</gene>
<dbReference type="EC" id="2.6.1.11"/>
<dbReference type="EMBL" id="Y08680">
    <property type="protein sequence ID" value="CAA69936.1"/>
    <property type="molecule type" value="mRNA"/>
</dbReference>
<dbReference type="SMR" id="O04866"/>
<dbReference type="UniPathway" id="UPA00068">
    <property type="reaction ID" value="UER00109"/>
</dbReference>
<dbReference type="GO" id="GO:0009570">
    <property type="term" value="C:chloroplast stroma"/>
    <property type="evidence" value="ECO:0007669"/>
    <property type="project" value="TreeGrafter"/>
</dbReference>
<dbReference type="GO" id="GO:0005739">
    <property type="term" value="C:mitochondrion"/>
    <property type="evidence" value="ECO:0007669"/>
    <property type="project" value="UniProtKB-SubCell"/>
</dbReference>
<dbReference type="GO" id="GO:0042802">
    <property type="term" value="F:identical protein binding"/>
    <property type="evidence" value="ECO:0007669"/>
    <property type="project" value="TreeGrafter"/>
</dbReference>
<dbReference type="GO" id="GO:0003992">
    <property type="term" value="F:N2-acetyl-L-ornithine:2-oxoglutarate 5-aminotransferase activity"/>
    <property type="evidence" value="ECO:0007669"/>
    <property type="project" value="UniProtKB-EC"/>
</dbReference>
<dbReference type="GO" id="GO:0030170">
    <property type="term" value="F:pyridoxal phosphate binding"/>
    <property type="evidence" value="ECO:0007669"/>
    <property type="project" value="InterPro"/>
</dbReference>
<dbReference type="GO" id="GO:0006526">
    <property type="term" value="P:L-arginine biosynthetic process"/>
    <property type="evidence" value="ECO:0007669"/>
    <property type="project" value="UniProtKB-UniPathway"/>
</dbReference>
<dbReference type="CDD" id="cd00610">
    <property type="entry name" value="OAT_like"/>
    <property type="match status" value="1"/>
</dbReference>
<dbReference type="FunFam" id="3.40.640.10:FF:000280">
    <property type="entry name" value="Acetylornithine aminotransferase, mitochondrial"/>
    <property type="match status" value="1"/>
</dbReference>
<dbReference type="Gene3D" id="3.90.1150.10">
    <property type="entry name" value="Aspartate Aminotransferase, domain 1"/>
    <property type="match status" value="1"/>
</dbReference>
<dbReference type="Gene3D" id="3.40.640.10">
    <property type="entry name" value="Type I PLP-dependent aspartate aminotransferase-like (Major domain)"/>
    <property type="match status" value="1"/>
</dbReference>
<dbReference type="HAMAP" id="MF_01107">
    <property type="entry name" value="ArgD_aminotrans_3"/>
    <property type="match status" value="1"/>
</dbReference>
<dbReference type="InterPro" id="IPR004636">
    <property type="entry name" value="AcOrn/SuccOrn_fam"/>
</dbReference>
<dbReference type="InterPro" id="IPR005814">
    <property type="entry name" value="Aminotrans_3"/>
</dbReference>
<dbReference type="InterPro" id="IPR049704">
    <property type="entry name" value="Aminotrans_3_PPA_site"/>
</dbReference>
<dbReference type="InterPro" id="IPR050103">
    <property type="entry name" value="Class-III_PLP-dep_AT"/>
</dbReference>
<dbReference type="InterPro" id="IPR015424">
    <property type="entry name" value="PyrdxlP-dep_Trfase"/>
</dbReference>
<dbReference type="InterPro" id="IPR015421">
    <property type="entry name" value="PyrdxlP-dep_Trfase_major"/>
</dbReference>
<dbReference type="InterPro" id="IPR015422">
    <property type="entry name" value="PyrdxlP-dep_Trfase_small"/>
</dbReference>
<dbReference type="NCBIfam" id="TIGR00707">
    <property type="entry name" value="argD"/>
    <property type="match status" value="1"/>
</dbReference>
<dbReference type="NCBIfam" id="NF002325">
    <property type="entry name" value="PRK01278.1"/>
    <property type="match status" value="1"/>
</dbReference>
<dbReference type="PANTHER" id="PTHR11986:SF79">
    <property type="entry name" value="ACETYLORNITHINE AMINOTRANSFERASE, MITOCHONDRIAL"/>
    <property type="match status" value="1"/>
</dbReference>
<dbReference type="PANTHER" id="PTHR11986">
    <property type="entry name" value="AMINOTRANSFERASE CLASS III"/>
    <property type="match status" value="1"/>
</dbReference>
<dbReference type="Pfam" id="PF00202">
    <property type="entry name" value="Aminotran_3"/>
    <property type="match status" value="1"/>
</dbReference>
<dbReference type="PIRSF" id="PIRSF000521">
    <property type="entry name" value="Transaminase_4ab_Lys_Orn"/>
    <property type="match status" value="1"/>
</dbReference>
<dbReference type="SUPFAM" id="SSF53383">
    <property type="entry name" value="PLP-dependent transferases"/>
    <property type="match status" value="1"/>
</dbReference>
<dbReference type="PROSITE" id="PS00600">
    <property type="entry name" value="AA_TRANSFER_CLASS_3"/>
    <property type="match status" value="1"/>
</dbReference>
<keyword id="KW-0028">Amino-acid biosynthesis</keyword>
<keyword id="KW-0032">Aminotransferase</keyword>
<keyword id="KW-0055">Arginine biosynthesis</keyword>
<keyword id="KW-0496">Mitochondrion</keyword>
<keyword id="KW-0663">Pyridoxal phosphate</keyword>
<keyword id="KW-0808">Transferase</keyword>
<keyword id="KW-0809">Transit peptide</keyword>
<sequence length="451" mass="48832">MTSLQYFSLNRPVFPATHLHRPGIRHLQVSACANVEVQAPSSVKKQGVSKEVMEAAGRVLVGTYARVPVVLSRGKGCKLYDPEGREYLDLSAGIAVNVLGHADSDWLRAVTEQAATLTHVSNVFYSIPQVELAKRLVASSFADRVFFSNSGTEANEAAIKFARKFQRFTRPDEKQPATEFVSFSNSFHGRTMGSLALTSKENYRSPFEPVMPGVTFLEYGNIEAATQLIQRRKIAAVFVEPIQGEGGVYSATKEFLYALRKACDDSGTLLVFDEVQCGLGRTGYLWAHEIYDVFPDIMTLAKPLAGGLPIGAVLVTERVASAITYGDHGTTFAGGPLVCKAALTVLDKILRPGFLASVSKKGHYFKEMLINKLGGNSHVREVRGVGLIVGIELDVSASPLVNACLNSGLLVLTAGKGNVVRIVPPLIITEQELEKAAEILLQCLPALDRHG</sequence>
<evidence type="ECO:0000250" key="1"/>
<evidence type="ECO:0000255" key="2"/>
<evidence type="ECO:0000305" key="3"/>
<feature type="transit peptide" description="Mitochondrion" evidence="2">
    <location>
        <begin position="1"/>
        <end status="unknown"/>
    </location>
</feature>
<feature type="chain" id="PRO_0000002075" description="Acetylornithine aminotransferase, mitochondrial">
    <location>
        <begin status="unknown"/>
        <end position="451"/>
    </location>
</feature>
<feature type="modified residue" description="N6-(pyridoxal phosphate)lysine" evidence="1">
    <location>
        <position position="302"/>
    </location>
</feature>
<name>ARGD_ALNGL</name>
<organism>
    <name type="scientific">Alnus glutinosa</name>
    <name type="common">European alder</name>
    <name type="synonym">Betula alnus var. glutinosa</name>
    <dbReference type="NCBI Taxonomy" id="3517"/>
    <lineage>
        <taxon>Eukaryota</taxon>
        <taxon>Viridiplantae</taxon>
        <taxon>Streptophyta</taxon>
        <taxon>Embryophyta</taxon>
        <taxon>Tracheophyta</taxon>
        <taxon>Spermatophyta</taxon>
        <taxon>Magnoliopsida</taxon>
        <taxon>eudicotyledons</taxon>
        <taxon>Gunneridae</taxon>
        <taxon>Pentapetalae</taxon>
        <taxon>rosids</taxon>
        <taxon>fabids</taxon>
        <taxon>Fagales</taxon>
        <taxon>Betulaceae</taxon>
        <taxon>Alnus</taxon>
    </lineage>
</organism>
<protein>
    <recommendedName>
        <fullName>Acetylornithine aminotransferase, mitochondrial</fullName>
        <shortName>ACOAT</shortName>
        <ecNumber>2.6.1.11</ecNumber>
    </recommendedName>
    <alternativeName>
        <fullName>Acetylornithine transaminase</fullName>
        <shortName>AOTA</shortName>
    </alternativeName>
</protein>
<comment type="function">
    <text>Involved in the biosynthesis of citrulline.</text>
</comment>
<comment type="catalytic activity">
    <reaction>
        <text>N(2)-acetyl-L-ornithine + 2-oxoglutarate = N-acetyl-L-glutamate 5-semialdehyde + L-glutamate</text>
        <dbReference type="Rhea" id="RHEA:18049"/>
        <dbReference type="ChEBI" id="CHEBI:16810"/>
        <dbReference type="ChEBI" id="CHEBI:29123"/>
        <dbReference type="ChEBI" id="CHEBI:29985"/>
        <dbReference type="ChEBI" id="CHEBI:57805"/>
        <dbReference type="EC" id="2.6.1.11"/>
    </reaction>
</comment>
<comment type="cofactor">
    <cofactor>
        <name>pyridoxal 5'-phosphate</name>
        <dbReference type="ChEBI" id="CHEBI:597326"/>
    </cofactor>
</comment>
<comment type="pathway">
    <text>Amino-acid biosynthesis; L-arginine biosynthesis; N(2)-acetyl-L-ornithine from L-glutamate: step 4/4.</text>
</comment>
<comment type="subcellular location">
    <subcellularLocation>
        <location>Mitochondrion</location>
    </subcellularLocation>
</comment>
<comment type="tissue specificity">
    <text>Found at highest levels in nodules, confined to the infected cells.</text>
</comment>
<comment type="similarity">
    <text evidence="3">Belongs to the class-III pyridoxal-phosphate-dependent aminotransferase family.</text>
</comment>